<gene>
    <name evidence="1" type="primary">rlmN</name>
    <name type="ordered locus">LEPBI_I1364</name>
</gene>
<reference key="1">
    <citation type="journal article" date="2008" name="PLoS ONE">
        <title>Genome sequence of the saprophyte Leptospira biflexa provides insights into the evolution of Leptospira and the pathogenesis of leptospirosis.</title>
        <authorList>
            <person name="Picardeau M."/>
            <person name="Bulach D.M."/>
            <person name="Bouchier C."/>
            <person name="Zuerner R.L."/>
            <person name="Zidane N."/>
            <person name="Wilson P.J."/>
            <person name="Creno S."/>
            <person name="Kuczek E.S."/>
            <person name="Bommezzadri S."/>
            <person name="Davis J.C."/>
            <person name="McGrath A."/>
            <person name="Johnson M.J."/>
            <person name="Boursaux-Eude C."/>
            <person name="Seemann T."/>
            <person name="Rouy Z."/>
            <person name="Coppel R.L."/>
            <person name="Rood J.I."/>
            <person name="Lajus A."/>
            <person name="Davies J.K."/>
            <person name="Medigue C."/>
            <person name="Adler B."/>
        </authorList>
    </citation>
    <scope>NUCLEOTIDE SEQUENCE [LARGE SCALE GENOMIC DNA]</scope>
    <source>
        <strain>Patoc 1 / ATCC 23582 / Paris</strain>
    </source>
</reference>
<evidence type="ECO:0000255" key="1">
    <source>
        <dbReference type="HAMAP-Rule" id="MF_01849"/>
    </source>
</evidence>
<evidence type="ECO:0000255" key="2">
    <source>
        <dbReference type="PROSITE-ProRule" id="PRU01266"/>
    </source>
</evidence>
<organism>
    <name type="scientific">Leptospira biflexa serovar Patoc (strain Patoc 1 / ATCC 23582 / Paris)</name>
    <dbReference type="NCBI Taxonomy" id="456481"/>
    <lineage>
        <taxon>Bacteria</taxon>
        <taxon>Pseudomonadati</taxon>
        <taxon>Spirochaetota</taxon>
        <taxon>Spirochaetia</taxon>
        <taxon>Leptospirales</taxon>
        <taxon>Leptospiraceae</taxon>
        <taxon>Leptospira</taxon>
    </lineage>
</organism>
<feature type="chain" id="PRO_0000350231" description="Probable dual-specificity RNA methyltransferase RlmN">
    <location>
        <begin position="1"/>
        <end position="353"/>
    </location>
</feature>
<feature type="domain" description="Radical SAM core" evidence="2">
    <location>
        <begin position="103"/>
        <end position="333"/>
    </location>
</feature>
<feature type="active site" description="Proton acceptor" evidence="1">
    <location>
        <position position="95"/>
    </location>
</feature>
<feature type="active site" description="S-methylcysteine intermediate" evidence="1">
    <location>
        <position position="339"/>
    </location>
</feature>
<feature type="binding site" evidence="1">
    <location>
        <position position="117"/>
    </location>
    <ligand>
        <name>[4Fe-4S] cluster</name>
        <dbReference type="ChEBI" id="CHEBI:49883"/>
        <note>4Fe-4S-S-AdoMet</note>
    </ligand>
</feature>
<feature type="binding site" evidence="1">
    <location>
        <position position="121"/>
    </location>
    <ligand>
        <name>[4Fe-4S] cluster</name>
        <dbReference type="ChEBI" id="CHEBI:49883"/>
        <note>4Fe-4S-S-AdoMet</note>
    </ligand>
</feature>
<feature type="binding site" evidence="1">
    <location>
        <position position="124"/>
    </location>
    <ligand>
        <name>[4Fe-4S] cluster</name>
        <dbReference type="ChEBI" id="CHEBI:49883"/>
        <note>4Fe-4S-S-AdoMet</note>
    </ligand>
</feature>
<feature type="binding site" evidence="1">
    <location>
        <begin position="164"/>
        <end position="165"/>
    </location>
    <ligand>
        <name>S-adenosyl-L-methionine</name>
        <dbReference type="ChEBI" id="CHEBI:59789"/>
    </ligand>
</feature>
<feature type="binding site" evidence="1">
    <location>
        <position position="196"/>
    </location>
    <ligand>
        <name>S-adenosyl-L-methionine</name>
        <dbReference type="ChEBI" id="CHEBI:59789"/>
    </ligand>
</feature>
<feature type="binding site" evidence="1">
    <location>
        <begin position="219"/>
        <end position="221"/>
    </location>
    <ligand>
        <name>S-adenosyl-L-methionine</name>
        <dbReference type="ChEBI" id="CHEBI:59789"/>
    </ligand>
</feature>
<feature type="binding site" evidence="1">
    <location>
        <position position="296"/>
    </location>
    <ligand>
        <name>S-adenosyl-L-methionine</name>
        <dbReference type="ChEBI" id="CHEBI:59789"/>
    </ligand>
</feature>
<feature type="disulfide bond" description="(transient)" evidence="1">
    <location>
        <begin position="110"/>
        <end position="339"/>
    </location>
</feature>
<protein>
    <recommendedName>
        <fullName evidence="1">Probable dual-specificity RNA methyltransferase RlmN</fullName>
        <ecNumber evidence="1">2.1.1.192</ecNumber>
    </recommendedName>
    <alternativeName>
        <fullName evidence="1">23S rRNA (adenine(2503)-C(2))-methyltransferase</fullName>
    </alternativeName>
    <alternativeName>
        <fullName evidence="1">23S rRNA m2A2503 methyltransferase</fullName>
    </alternativeName>
    <alternativeName>
        <fullName evidence="1">Ribosomal RNA large subunit methyltransferase N</fullName>
    </alternativeName>
    <alternativeName>
        <fullName evidence="1">tRNA (adenine(37)-C(2))-methyltransferase</fullName>
    </alternativeName>
    <alternativeName>
        <fullName evidence="1">tRNA m2A37 methyltransferase</fullName>
    </alternativeName>
</protein>
<name>RLMN_LEPBP</name>
<proteinExistence type="inferred from homology"/>
<comment type="function">
    <text evidence="1">Specifically methylates position 2 of adenine 2503 in 23S rRNA and position 2 of adenine 37 in tRNAs.</text>
</comment>
<comment type="catalytic activity">
    <reaction evidence="1">
        <text>adenosine(2503) in 23S rRNA + 2 reduced [2Fe-2S]-[ferredoxin] + 2 S-adenosyl-L-methionine = 2-methyladenosine(2503) in 23S rRNA + 5'-deoxyadenosine + L-methionine + 2 oxidized [2Fe-2S]-[ferredoxin] + S-adenosyl-L-homocysteine</text>
        <dbReference type="Rhea" id="RHEA:42916"/>
        <dbReference type="Rhea" id="RHEA-COMP:10000"/>
        <dbReference type="Rhea" id="RHEA-COMP:10001"/>
        <dbReference type="Rhea" id="RHEA-COMP:10152"/>
        <dbReference type="Rhea" id="RHEA-COMP:10282"/>
        <dbReference type="ChEBI" id="CHEBI:17319"/>
        <dbReference type="ChEBI" id="CHEBI:33737"/>
        <dbReference type="ChEBI" id="CHEBI:33738"/>
        <dbReference type="ChEBI" id="CHEBI:57844"/>
        <dbReference type="ChEBI" id="CHEBI:57856"/>
        <dbReference type="ChEBI" id="CHEBI:59789"/>
        <dbReference type="ChEBI" id="CHEBI:74411"/>
        <dbReference type="ChEBI" id="CHEBI:74497"/>
        <dbReference type="EC" id="2.1.1.192"/>
    </reaction>
</comment>
<comment type="catalytic activity">
    <reaction evidence="1">
        <text>adenosine(37) in tRNA + 2 reduced [2Fe-2S]-[ferredoxin] + 2 S-adenosyl-L-methionine = 2-methyladenosine(37) in tRNA + 5'-deoxyadenosine + L-methionine + 2 oxidized [2Fe-2S]-[ferredoxin] + S-adenosyl-L-homocysteine</text>
        <dbReference type="Rhea" id="RHEA:43332"/>
        <dbReference type="Rhea" id="RHEA-COMP:10000"/>
        <dbReference type="Rhea" id="RHEA-COMP:10001"/>
        <dbReference type="Rhea" id="RHEA-COMP:10162"/>
        <dbReference type="Rhea" id="RHEA-COMP:10485"/>
        <dbReference type="ChEBI" id="CHEBI:17319"/>
        <dbReference type="ChEBI" id="CHEBI:33737"/>
        <dbReference type="ChEBI" id="CHEBI:33738"/>
        <dbReference type="ChEBI" id="CHEBI:57844"/>
        <dbReference type="ChEBI" id="CHEBI:57856"/>
        <dbReference type="ChEBI" id="CHEBI:59789"/>
        <dbReference type="ChEBI" id="CHEBI:74411"/>
        <dbReference type="ChEBI" id="CHEBI:74497"/>
        <dbReference type="EC" id="2.1.1.192"/>
    </reaction>
</comment>
<comment type="cofactor">
    <cofactor evidence="1">
        <name>[4Fe-4S] cluster</name>
        <dbReference type="ChEBI" id="CHEBI:49883"/>
    </cofactor>
    <text evidence="1">Binds 1 [4Fe-4S] cluster. The cluster is coordinated with 3 cysteines and an exchangeable S-adenosyl-L-methionine.</text>
</comment>
<comment type="subcellular location">
    <subcellularLocation>
        <location evidence="1">Cytoplasm</location>
    </subcellularLocation>
</comment>
<comment type="miscellaneous">
    <text evidence="1">Reaction proceeds by a ping-pong mechanism involving intermediate methylation of a conserved cysteine residue.</text>
</comment>
<comment type="similarity">
    <text evidence="1">Belongs to the radical SAM superfamily. RlmN family.</text>
</comment>
<sequence>MKEEIPVLKGKTKKELEEICVSLGLEKYRAAQIYTGIYKSRYTTIDQFTTLSKEVREKLKEHTQYPEIEIGRDLVSKEDGTRKFTFYVGENKEIEAVWIPSGDGGRKTICISSQIGCTLNCKFCATGLLEYKGNLQTWQILDQVLQVERLVGDRATNIVFMGMGEPMHNYFSVMKAAHILRDKDAFGLGALRITISTAGVTTGINRFIENKEPFNFAISLNHPNPNARSSVMDVNDKHPLEKLIDSAKRFTKELDRAITFEYVMIPDVNMGRDNAERLAKIARSVNKCKINVIPLNTDFTGWRRPTDDEVKDFVMHLKAKTTAPILNRRSPGRDINGACGMLALKGIRSETTK</sequence>
<dbReference type="EC" id="2.1.1.192" evidence="1"/>
<dbReference type="EMBL" id="CP000786">
    <property type="protein sequence ID" value="ABZ97474.1"/>
    <property type="molecule type" value="Genomic_DNA"/>
</dbReference>
<dbReference type="RefSeq" id="WP_012388354.1">
    <property type="nucleotide sequence ID" value="NC_010602.1"/>
</dbReference>
<dbReference type="SMR" id="B0SPQ8"/>
<dbReference type="STRING" id="456481.LEPBI_I1364"/>
<dbReference type="KEGG" id="lbi:LEPBI_I1364"/>
<dbReference type="HOGENOM" id="CLU_029101_0_1_12"/>
<dbReference type="OrthoDB" id="9793973at2"/>
<dbReference type="BioCyc" id="LBIF456481:LEPBI_RS06695-MONOMER"/>
<dbReference type="Proteomes" id="UP000001847">
    <property type="component" value="Chromosome I"/>
</dbReference>
<dbReference type="GO" id="GO:0005737">
    <property type="term" value="C:cytoplasm"/>
    <property type="evidence" value="ECO:0007669"/>
    <property type="project" value="UniProtKB-SubCell"/>
</dbReference>
<dbReference type="GO" id="GO:0051539">
    <property type="term" value="F:4 iron, 4 sulfur cluster binding"/>
    <property type="evidence" value="ECO:0007669"/>
    <property type="project" value="UniProtKB-UniRule"/>
</dbReference>
<dbReference type="GO" id="GO:0046872">
    <property type="term" value="F:metal ion binding"/>
    <property type="evidence" value="ECO:0007669"/>
    <property type="project" value="UniProtKB-KW"/>
</dbReference>
<dbReference type="GO" id="GO:0070040">
    <property type="term" value="F:rRNA (adenine(2503)-C2-)-methyltransferase activity"/>
    <property type="evidence" value="ECO:0007669"/>
    <property type="project" value="UniProtKB-UniRule"/>
</dbReference>
<dbReference type="GO" id="GO:0019843">
    <property type="term" value="F:rRNA binding"/>
    <property type="evidence" value="ECO:0007669"/>
    <property type="project" value="UniProtKB-UniRule"/>
</dbReference>
<dbReference type="GO" id="GO:0002935">
    <property type="term" value="F:tRNA (adenine(37)-C2)-methyltransferase activity"/>
    <property type="evidence" value="ECO:0007669"/>
    <property type="project" value="UniProtKB-UniRule"/>
</dbReference>
<dbReference type="GO" id="GO:0000049">
    <property type="term" value="F:tRNA binding"/>
    <property type="evidence" value="ECO:0007669"/>
    <property type="project" value="UniProtKB-UniRule"/>
</dbReference>
<dbReference type="GO" id="GO:0070475">
    <property type="term" value="P:rRNA base methylation"/>
    <property type="evidence" value="ECO:0007669"/>
    <property type="project" value="UniProtKB-UniRule"/>
</dbReference>
<dbReference type="GO" id="GO:0030488">
    <property type="term" value="P:tRNA methylation"/>
    <property type="evidence" value="ECO:0007669"/>
    <property type="project" value="UniProtKB-UniRule"/>
</dbReference>
<dbReference type="CDD" id="cd01335">
    <property type="entry name" value="Radical_SAM"/>
    <property type="match status" value="1"/>
</dbReference>
<dbReference type="Gene3D" id="1.10.150.530">
    <property type="match status" value="1"/>
</dbReference>
<dbReference type="Gene3D" id="3.20.20.70">
    <property type="entry name" value="Aldolase class I"/>
    <property type="match status" value="1"/>
</dbReference>
<dbReference type="HAMAP" id="MF_01849">
    <property type="entry name" value="RNA_methyltr_RlmN"/>
    <property type="match status" value="1"/>
</dbReference>
<dbReference type="InterPro" id="IPR013785">
    <property type="entry name" value="Aldolase_TIM"/>
</dbReference>
<dbReference type="InterPro" id="IPR040072">
    <property type="entry name" value="Methyltransferase_A"/>
</dbReference>
<dbReference type="InterPro" id="IPR048641">
    <property type="entry name" value="RlmN_N"/>
</dbReference>
<dbReference type="InterPro" id="IPR027492">
    <property type="entry name" value="RNA_MTrfase_RlmN"/>
</dbReference>
<dbReference type="InterPro" id="IPR004383">
    <property type="entry name" value="rRNA_lsu_MTrfase_RlmN/Cfr"/>
</dbReference>
<dbReference type="InterPro" id="IPR007197">
    <property type="entry name" value="rSAM"/>
</dbReference>
<dbReference type="PANTHER" id="PTHR30544">
    <property type="entry name" value="23S RRNA METHYLTRANSFERASE"/>
    <property type="match status" value="1"/>
</dbReference>
<dbReference type="PANTHER" id="PTHR30544:SF5">
    <property type="entry name" value="RADICAL SAM CORE DOMAIN-CONTAINING PROTEIN"/>
    <property type="match status" value="1"/>
</dbReference>
<dbReference type="Pfam" id="PF04055">
    <property type="entry name" value="Radical_SAM"/>
    <property type="match status" value="1"/>
</dbReference>
<dbReference type="Pfam" id="PF21016">
    <property type="entry name" value="RlmN_N"/>
    <property type="match status" value="1"/>
</dbReference>
<dbReference type="PIRSF" id="PIRSF006004">
    <property type="entry name" value="CHP00048"/>
    <property type="match status" value="1"/>
</dbReference>
<dbReference type="SFLD" id="SFLDF00275">
    <property type="entry name" value="adenosine_C2_methyltransferase"/>
    <property type="match status" value="1"/>
</dbReference>
<dbReference type="SFLD" id="SFLDS00029">
    <property type="entry name" value="Radical_SAM"/>
    <property type="match status" value="1"/>
</dbReference>
<dbReference type="SUPFAM" id="SSF102114">
    <property type="entry name" value="Radical SAM enzymes"/>
    <property type="match status" value="1"/>
</dbReference>
<dbReference type="PROSITE" id="PS51918">
    <property type="entry name" value="RADICAL_SAM"/>
    <property type="match status" value="1"/>
</dbReference>
<accession>B0SPQ8</accession>
<keyword id="KW-0004">4Fe-4S</keyword>
<keyword id="KW-0963">Cytoplasm</keyword>
<keyword id="KW-1015">Disulfide bond</keyword>
<keyword id="KW-0408">Iron</keyword>
<keyword id="KW-0411">Iron-sulfur</keyword>
<keyword id="KW-0479">Metal-binding</keyword>
<keyword id="KW-0489">Methyltransferase</keyword>
<keyword id="KW-1185">Reference proteome</keyword>
<keyword id="KW-0698">rRNA processing</keyword>
<keyword id="KW-0949">S-adenosyl-L-methionine</keyword>
<keyword id="KW-0808">Transferase</keyword>
<keyword id="KW-0819">tRNA processing</keyword>